<protein>
    <recommendedName>
        <fullName>Solute carrier family 41 member 2</fullName>
    </recommendedName>
</protein>
<name>S41A2_MOUSE</name>
<proteinExistence type="evidence at protein level"/>
<organism>
    <name type="scientific">Mus musculus</name>
    <name type="common">Mouse</name>
    <dbReference type="NCBI Taxonomy" id="10090"/>
    <lineage>
        <taxon>Eukaryota</taxon>
        <taxon>Metazoa</taxon>
        <taxon>Chordata</taxon>
        <taxon>Craniata</taxon>
        <taxon>Vertebrata</taxon>
        <taxon>Euteleostomi</taxon>
        <taxon>Mammalia</taxon>
        <taxon>Eutheria</taxon>
        <taxon>Euarchontoglires</taxon>
        <taxon>Glires</taxon>
        <taxon>Rodentia</taxon>
        <taxon>Myomorpha</taxon>
        <taxon>Muroidea</taxon>
        <taxon>Muridae</taxon>
        <taxon>Murinae</taxon>
        <taxon>Mus</taxon>
        <taxon>Mus</taxon>
    </lineage>
</organism>
<feature type="chain" id="PRO_0000295042" description="Solute carrier family 41 member 2">
    <location>
        <begin position="1"/>
        <end position="573"/>
    </location>
</feature>
<feature type="topological domain" description="Extracellular" evidence="2">
    <location>
        <begin position="1"/>
        <end position="162"/>
    </location>
</feature>
<feature type="transmembrane region" description="Helical" evidence="2">
    <location>
        <begin position="163"/>
        <end position="183"/>
    </location>
</feature>
<feature type="topological domain" description="Cytoplasmic" evidence="1">
    <location>
        <begin position="184"/>
        <end position="195"/>
    </location>
</feature>
<feature type="transmembrane region" description="Helical" evidence="2">
    <location>
        <begin position="196"/>
        <end position="216"/>
    </location>
</feature>
<feature type="topological domain" description="Extracellular" evidence="1">
    <location>
        <begin position="217"/>
        <end position="245"/>
    </location>
</feature>
<feature type="transmembrane region" description="Helical" evidence="2">
    <location>
        <begin position="246"/>
        <end position="266"/>
    </location>
</feature>
<feature type="topological domain" description="Cytoplasmic" evidence="1">
    <location>
        <begin position="267"/>
        <end position="282"/>
    </location>
</feature>
<feature type="transmembrane region" description="Helical" evidence="2">
    <location>
        <begin position="283"/>
        <end position="303"/>
    </location>
</feature>
<feature type="topological domain" description="Extracellular" evidence="1">
    <location>
        <begin position="304"/>
        <end position="313"/>
    </location>
</feature>
<feature type="transmembrane region" description="Helical" evidence="2">
    <location>
        <begin position="314"/>
        <end position="334"/>
    </location>
</feature>
<feature type="topological domain" description="Cytoplasmic" evidence="1">
    <location>
        <begin position="335"/>
        <end position="347"/>
    </location>
</feature>
<feature type="transmembrane region" description="Helical" evidence="2">
    <location>
        <begin position="348"/>
        <end position="368"/>
    </location>
</feature>
<feature type="topological domain" description="Extracellular" evidence="1">
    <location>
        <begin position="369"/>
        <end position="376"/>
    </location>
</feature>
<feature type="transmembrane region" description="Helical" evidence="2">
    <location>
        <begin position="377"/>
        <end position="397"/>
    </location>
</feature>
<feature type="topological domain" description="Cytoplasmic" evidence="1">
    <location>
        <begin position="398"/>
        <end position="406"/>
    </location>
</feature>
<feature type="transmembrane region" description="Helical" evidence="2">
    <location>
        <begin position="407"/>
        <end position="427"/>
    </location>
</feature>
<feature type="topological domain" description="Extracellular" evidence="1">
    <location>
        <begin position="428"/>
        <end position="469"/>
    </location>
</feature>
<feature type="transmembrane region" description="Helical" evidence="2">
    <location>
        <begin position="470"/>
        <end position="490"/>
    </location>
</feature>
<feature type="topological domain" description="Cytoplasmic" evidence="1">
    <location>
        <begin position="491"/>
        <end position="498"/>
    </location>
</feature>
<feature type="transmembrane region" description="Helical" evidence="2">
    <location>
        <begin position="499"/>
        <end position="519"/>
    </location>
</feature>
<feature type="topological domain" description="Extracellular" evidence="1">
    <location>
        <begin position="520"/>
        <end position="543"/>
    </location>
</feature>
<feature type="transmembrane region" description="Helical" evidence="2">
    <location>
        <begin position="544"/>
        <end position="564"/>
    </location>
</feature>
<feature type="topological domain" description="Cytoplasmic" evidence="1">
    <location>
        <begin position="565"/>
        <end position="573"/>
    </location>
</feature>
<feature type="modified residue" description="Phosphoserine" evidence="5">
    <location>
        <position position="137"/>
    </location>
</feature>
<feature type="modified residue" description="Phosphoserine" evidence="5">
    <location>
        <position position="138"/>
    </location>
</feature>
<keyword id="KW-1003">Cell membrane</keyword>
<keyword id="KW-0406">Ion transport</keyword>
<keyword id="KW-0460">Magnesium</keyword>
<keyword id="KW-0472">Membrane</keyword>
<keyword id="KW-0597">Phosphoprotein</keyword>
<keyword id="KW-1185">Reference proteome</keyword>
<keyword id="KW-0677">Repeat</keyword>
<keyword id="KW-0812">Transmembrane</keyword>
<keyword id="KW-1133">Transmembrane helix</keyword>
<keyword id="KW-0813">Transport</keyword>
<dbReference type="EMBL" id="AK038549">
    <property type="protein sequence ID" value="BAC30038.1"/>
    <property type="molecule type" value="mRNA"/>
</dbReference>
<dbReference type="CCDS" id="CCDS24075.1"/>
<dbReference type="RefSeq" id="NP_796362.1">
    <property type="nucleotide sequence ID" value="NM_177388.3"/>
</dbReference>
<dbReference type="RefSeq" id="XP_006513874.1">
    <property type="nucleotide sequence ID" value="XM_006513811.5"/>
</dbReference>
<dbReference type="RefSeq" id="XP_011241800.1">
    <property type="nucleotide sequence ID" value="XM_011243498.2"/>
</dbReference>
<dbReference type="FunCoup" id="Q8BYR8">
    <property type="interactions" value="390"/>
</dbReference>
<dbReference type="STRING" id="10090.ENSMUSP00000036690"/>
<dbReference type="iPTMnet" id="Q8BYR8"/>
<dbReference type="PhosphoSitePlus" id="Q8BYR8"/>
<dbReference type="PaxDb" id="10090-ENSMUSP00000036690"/>
<dbReference type="ProteomicsDB" id="256904"/>
<dbReference type="Antibodypedia" id="30606">
    <property type="antibodies" value="145 antibodies from 17 providers"/>
</dbReference>
<dbReference type="DNASU" id="338365"/>
<dbReference type="Ensembl" id="ENSMUST00000039956.6">
    <property type="protein sequence ID" value="ENSMUSP00000036690.6"/>
    <property type="gene ID" value="ENSMUSG00000034591.6"/>
</dbReference>
<dbReference type="GeneID" id="338365"/>
<dbReference type="KEGG" id="mmu:338365"/>
<dbReference type="UCSC" id="uc007gkf.1">
    <property type="organism name" value="mouse"/>
</dbReference>
<dbReference type="AGR" id="MGI:2442940"/>
<dbReference type="CTD" id="84102"/>
<dbReference type="MGI" id="MGI:2442940">
    <property type="gene designation" value="Slc41a2"/>
</dbReference>
<dbReference type="VEuPathDB" id="HostDB:ENSMUSG00000034591"/>
<dbReference type="eggNOG" id="KOG3788">
    <property type="taxonomic scope" value="Eukaryota"/>
</dbReference>
<dbReference type="GeneTree" id="ENSGT00950000183042"/>
<dbReference type="HOGENOM" id="CLU_018207_3_0_1"/>
<dbReference type="InParanoid" id="Q8BYR8"/>
<dbReference type="OMA" id="NDKAYHG"/>
<dbReference type="OrthoDB" id="5791097at2759"/>
<dbReference type="PhylomeDB" id="Q8BYR8"/>
<dbReference type="TreeFam" id="TF313647"/>
<dbReference type="Reactome" id="R-MMU-425410">
    <property type="pathway name" value="Metal ion SLC transporters"/>
</dbReference>
<dbReference type="BioGRID-ORCS" id="338365">
    <property type="hits" value="2 hits in 79 CRISPR screens"/>
</dbReference>
<dbReference type="ChiTaRS" id="Slc41a2">
    <property type="organism name" value="mouse"/>
</dbReference>
<dbReference type="PRO" id="PR:Q8BYR8"/>
<dbReference type="Proteomes" id="UP000000589">
    <property type="component" value="Chromosome 10"/>
</dbReference>
<dbReference type="RNAct" id="Q8BYR8">
    <property type="molecule type" value="protein"/>
</dbReference>
<dbReference type="Bgee" id="ENSMUSG00000034591">
    <property type="expression patterns" value="Expressed in lacrimal gland and 190 other cell types or tissues"/>
</dbReference>
<dbReference type="ExpressionAtlas" id="Q8BYR8">
    <property type="expression patterns" value="baseline and differential"/>
</dbReference>
<dbReference type="GO" id="GO:0005886">
    <property type="term" value="C:plasma membrane"/>
    <property type="evidence" value="ECO:0007669"/>
    <property type="project" value="UniProtKB-SubCell"/>
</dbReference>
<dbReference type="GO" id="GO:0022890">
    <property type="term" value="F:inorganic cation transmembrane transporter activity"/>
    <property type="evidence" value="ECO:0000314"/>
    <property type="project" value="MGI"/>
</dbReference>
<dbReference type="GO" id="GO:0008324">
    <property type="term" value="F:monoatomic cation transmembrane transporter activity"/>
    <property type="evidence" value="ECO:0007669"/>
    <property type="project" value="InterPro"/>
</dbReference>
<dbReference type="GO" id="GO:0006824">
    <property type="term" value="P:cobalt ion transport"/>
    <property type="evidence" value="ECO:0000314"/>
    <property type="project" value="UniProtKB"/>
</dbReference>
<dbReference type="GO" id="GO:0006826">
    <property type="term" value="P:iron ion transport"/>
    <property type="evidence" value="ECO:0000314"/>
    <property type="project" value="UniProtKB"/>
</dbReference>
<dbReference type="GO" id="GO:0015693">
    <property type="term" value="P:magnesium ion transport"/>
    <property type="evidence" value="ECO:0000314"/>
    <property type="project" value="UniProtKB"/>
</dbReference>
<dbReference type="GO" id="GO:0006828">
    <property type="term" value="P:manganese ion transport"/>
    <property type="evidence" value="ECO:0000314"/>
    <property type="project" value="UniProtKB"/>
</dbReference>
<dbReference type="GO" id="GO:0030001">
    <property type="term" value="P:metal ion transport"/>
    <property type="evidence" value="ECO:0000314"/>
    <property type="project" value="MGI"/>
</dbReference>
<dbReference type="GO" id="GO:0015675">
    <property type="term" value="P:nickel cation transport"/>
    <property type="evidence" value="ECO:0000314"/>
    <property type="project" value="UniProtKB"/>
</dbReference>
<dbReference type="FunFam" id="1.10.357.20:FF:000001">
    <property type="entry name" value="Solute carrier family 41 member 2"/>
    <property type="match status" value="1"/>
</dbReference>
<dbReference type="FunFam" id="1.10.357.20:FF:000002">
    <property type="entry name" value="Solute carrier family 41, member 2"/>
    <property type="match status" value="1"/>
</dbReference>
<dbReference type="Gene3D" id="1.10.357.20">
    <property type="entry name" value="SLC41 divalent cation transporters, integral membrane domain"/>
    <property type="match status" value="2"/>
</dbReference>
<dbReference type="InterPro" id="IPR006667">
    <property type="entry name" value="SLC41_membr_dom"/>
</dbReference>
<dbReference type="InterPro" id="IPR036739">
    <property type="entry name" value="SLC41_membr_dom_sf"/>
</dbReference>
<dbReference type="InterPro" id="IPR045349">
    <property type="entry name" value="SLC41A1-3"/>
</dbReference>
<dbReference type="PANTHER" id="PTHR16228">
    <property type="entry name" value="DIVALENT CATION TRANSPORTER SOLUTE CARRIER FAMILY 41"/>
    <property type="match status" value="1"/>
</dbReference>
<dbReference type="PANTHER" id="PTHR16228:SF25">
    <property type="entry name" value="SOLUTE CARRIER FAMILY 41 MEMBER 2"/>
    <property type="match status" value="1"/>
</dbReference>
<dbReference type="Pfam" id="PF01769">
    <property type="entry name" value="MgtE"/>
    <property type="match status" value="2"/>
</dbReference>
<dbReference type="SUPFAM" id="SSF161093">
    <property type="entry name" value="MgtE membrane domain-like"/>
    <property type="match status" value="2"/>
</dbReference>
<reference key="1">
    <citation type="journal article" date="2005" name="Science">
        <title>The transcriptional landscape of the mammalian genome.</title>
        <authorList>
            <person name="Carninci P."/>
            <person name="Kasukawa T."/>
            <person name="Katayama S."/>
            <person name="Gough J."/>
            <person name="Frith M.C."/>
            <person name="Maeda N."/>
            <person name="Oyama R."/>
            <person name="Ravasi T."/>
            <person name="Lenhard B."/>
            <person name="Wells C."/>
            <person name="Kodzius R."/>
            <person name="Shimokawa K."/>
            <person name="Bajic V.B."/>
            <person name="Brenner S.E."/>
            <person name="Batalov S."/>
            <person name="Forrest A.R."/>
            <person name="Zavolan M."/>
            <person name="Davis M.J."/>
            <person name="Wilming L.G."/>
            <person name="Aidinis V."/>
            <person name="Allen J.E."/>
            <person name="Ambesi-Impiombato A."/>
            <person name="Apweiler R."/>
            <person name="Aturaliya R.N."/>
            <person name="Bailey T.L."/>
            <person name="Bansal M."/>
            <person name="Baxter L."/>
            <person name="Beisel K.W."/>
            <person name="Bersano T."/>
            <person name="Bono H."/>
            <person name="Chalk A.M."/>
            <person name="Chiu K.P."/>
            <person name="Choudhary V."/>
            <person name="Christoffels A."/>
            <person name="Clutterbuck D.R."/>
            <person name="Crowe M.L."/>
            <person name="Dalla E."/>
            <person name="Dalrymple B.P."/>
            <person name="de Bono B."/>
            <person name="Della Gatta G."/>
            <person name="di Bernardo D."/>
            <person name="Down T."/>
            <person name="Engstrom P."/>
            <person name="Fagiolini M."/>
            <person name="Faulkner G."/>
            <person name="Fletcher C.F."/>
            <person name="Fukushima T."/>
            <person name="Furuno M."/>
            <person name="Futaki S."/>
            <person name="Gariboldi M."/>
            <person name="Georgii-Hemming P."/>
            <person name="Gingeras T.R."/>
            <person name="Gojobori T."/>
            <person name="Green R.E."/>
            <person name="Gustincich S."/>
            <person name="Harbers M."/>
            <person name="Hayashi Y."/>
            <person name="Hensch T.K."/>
            <person name="Hirokawa N."/>
            <person name="Hill D."/>
            <person name="Huminiecki L."/>
            <person name="Iacono M."/>
            <person name="Ikeo K."/>
            <person name="Iwama A."/>
            <person name="Ishikawa T."/>
            <person name="Jakt M."/>
            <person name="Kanapin A."/>
            <person name="Katoh M."/>
            <person name="Kawasawa Y."/>
            <person name="Kelso J."/>
            <person name="Kitamura H."/>
            <person name="Kitano H."/>
            <person name="Kollias G."/>
            <person name="Krishnan S.P."/>
            <person name="Kruger A."/>
            <person name="Kummerfeld S.K."/>
            <person name="Kurochkin I.V."/>
            <person name="Lareau L.F."/>
            <person name="Lazarevic D."/>
            <person name="Lipovich L."/>
            <person name="Liu J."/>
            <person name="Liuni S."/>
            <person name="McWilliam S."/>
            <person name="Madan Babu M."/>
            <person name="Madera M."/>
            <person name="Marchionni L."/>
            <person name="Matsuda H."/>
            <person name="Matsuzawa S."/>
            <person name="Miki H."/>
            <person name="Mignone F."/>
            <person name="Miyake S."/>
            <person name="Morris K."/>
            <person name="Mottagui-Tabar S."/>
            <person name="Mulder N."/>
            <person name="Nakano N."/>
            <person name="Nakauchi H."/>
            <person name="Ng P."/>
            <person name="Nilsson R."/>
            <person name="Nishiguchi S."/>
            <person name="Nishikawa S."/>
            <person name="Nori F."/>
            <person name="Ohara O."/>
            <person name="Okazaki Y."/>
            <person name="Orlando V."/>
            <person name="Pang K.C."/>
            <person name="Pavan W.J."/>
            <person name="Pavesi G."/>
            <person name="Pesole G."/>
            <person name="Petrovsky N."/>
            <person name="Piazza S."/>
            <person name="Reed J."/>
            <person name="Reid J.F."/>
            <person name="Ring B.Z."/>
            <person name="Ringwald M."/>
            <person name="Rost B."/>
            <person name="Ruan Y."/>
            <person name="Salzberg S.L."/>
            <person name="Sandelin A."/>
            <person name="Schneider C."/>
            <person name="Schoenbach C."/>
            <person name="Sekiguchi K."/>
            <person name="Semple C.A."/>
            <person name="Seno S."/>
            <person name="Sessa L."/>
            <person name="Sheng Y."/>
            <person name="Shibata Y."/>
            <person name="Shimada H."/>
            <person name="Shimada K."/>
            <person name="Silva D."/>
            <person name="Sinclair B."/>
            <person name="Sperling S."/>
            <person name="Stupka E."/>
            <person name="Sugiura K."/>
            <person name="Sultana R."/>
            <person name="Takenaka Y."/>
            <person name="Taki K."/>
            <person name="Tammoja K."/>
            <person name="Tan S.L."/>
            <person name="Tang S."/>
            <person name="Taylor M.S."/>
            <person name="Tegner J."/>
            <person name="Teichmann S.A."/>
            <person name="Ueda H.R."/>
            <person name="van Nimwegen E."/>
            <person name="Verardo R."/>
            <person name="Wei C.L."/>
            <person name="Yagi K."/>
            <person name="Yamanishi H."/>
            <person name="Zabarovsky E."/>
            <person name="Zhu S."/>
            <person name="Zimmer A."/>
            <person name="Hide W."/>
            <person name="Bult C."/>
            <person name="Grimmond S.M."/>
            <person name="Teasdale R.D."/>
            <person name="Liu E.T."/>
            <person name="Brusic V."/>
            <person name="Quackenbush J."/>
            <person name="Wahlestedt C."/>
            <person name="Mattick J.S."/>
            <person name="Hume D.A."/>
            <person name="Kai C."/>
            <person name="Sasaki D."/>
            <person name="Tomaru Y."/>
            <person name="Fukuda S."/>
            <person name="Kanamori-Katayama M."/>
            <person name="Suzuki M."/>
            <person name="Aoki J."/>
            <person name="Arakawa T."/>
            <person name="Iida J."/>
            <person name="Imamura K."/>
            <person name="Itoh M."/>
            <person name="Kato T."/>
            <person name="Kawaji H."/>
            <person name="Kawagashira N."/>
            <person name="Kawashima T."/>
            <person name="Kojima M."/>
            <person name="Kondo S."/>
            <person name="Konno H."/>
            <person name="Nakano K."/>
            <person name="Ninomiya N."/>
            <person name="Nishio T."/>
            <person name="Okada M."/>
            <person name="Plessy C."/>
            <person name="Shibata K."/>
            <person name="Shiraki T."/>
            <person name="Suzuki S."/>
            <person name="Tagami M."/>
            <person name="Waki K."/>
            <person name="Watahiki A."/>
            <person name="Okamura-Oho Y."/>
            <person name="Suzuki H."/>
            <person name="Kawai J."/>
            <person name="Hayashizaki Y."/>
        </authorList>
    </citation>
    <scope>NUCLEOTIDE SEQUENCE [LARGE SCALE MRNA]</scope>
    <source>
        <strain>C57BL/6J</strain>
        <tissue>Hypothalamus</tissue>
    </source>
</reference>
<reference key="2">
    <citation type="journal article" date="2005" name="Biochem. Biophys. Res. Commun.">
        <title>Functional characterization of the mouse solute carrier, SLC41A2.</title>
        <authorList>
            <person name="Goytain A."/>
            <person name="Quamme G.A."/>
        </authorList>
    </citation>
    <scope>FUNCTION</scope>
    <scope>TRANSPORTER ACTIVITY</scope>
    <scope>BIOPHYSICOCHEMICAL PROPERTIES</scope>
</reference>
<reference key="3">
    <citation type="journal article" date="2010" name="Cell">
        <title>A tissue-specific atlas of mouse protein phosphorylation and expression.</title>
        <authorList>
            <person name="Huttlin E.L."/>
            <person name="Jedrychowski M.P."/>
            <person name="Elias J.E."/>
            <person name="Goswami T."/>
            <person name="Rad R."/>
            <person name="Beausoleil S.A."/>
            <person name="Villen J."/>
            <person name="Haas W."/>
            <person name="Sowa M.E."/>
            <person name="Gygi S.P."/>
        </authorList>
    </citation>
    <scope>PHOSPHORYLATION [LARGE SCALE ANALYSIS] AT SER-137 AND SER-138</scope>
    <scope>IDENTIFICATION BY MASS SPECTROMETRY [LARGE SCALE ANALYSIS]</scope>
    <source>
        <tissue>Testis</tissue>
    </source>
</reference>
<sequence length="573" mass="62305">MTHSKGRPVTYKTSASPESGGGFVDWTLNLNTIQSDKFLNLLLSMVPVIYQKNQEDRHKKVNGIWQDGLSGAAQTFSKRSEPHLDYHEFSEQAFHSSSSGHTPASCSPKYDDYAGYNYCDGREASETTAMLQDEDLSSEGDDVIVETSQRIPKESSGVMALQILVPFLLAGFGTVSAGMVLDIVQHWEVFKNVTEVFILVPALLGLKGNLEMTLASRLSTAVNVGKMDSPIEKWNLIIGNLALKQVQATVVGFLAAVAAIILGWIPEGKYYLSHSILLCSSSVATAFIASLLQGIIMVGVIVGSKKTGINPDNVATPIAASFGDLITLAILAWISQGLYSCLETYYYISPLVCAFFLALTPIWIIIAAKHPATRTVLHSGWEPVITAMVISSIGGLILDTTVSDPNLVGIVVYTPVINGIGGNLVAIQASRISTYLHLHSIPGELPEEPKGCSYPFRTFFGSGVNNKSAQVLLLFVIPGHLIFLYTIHLMKSGHTSLTVVFVVVYLFAAVLQVFTLLWIADWMVHRFWRKGKDPDSFSIPYLTALGDLLGTALLALSFHFLWLIGDRDGDVGD</sequence>
<accession>Q8BYR8</accession>
<comment type="function">
    <text evidence="3">Acts as a plasma-membrane magnesium transporter (PubMed:15809054). Can also mediate the transport of other divalent metal cations in an order of Ba(2+) &gt; Ni(2+) &gt; Co(2+) &gt; Fe(2+) &gt; Mn(2+) (PubMed:15809054).</text>
</comment>
<comment type="catalytic activity">
    <reaction evidence="3">
        <text>Mg(2+)(in) = Mg(2+)(out)</text>
        <dbReference type="Rhea" id="RHEA:29827"/>
        <dbReference type="ChEBI" id="CHEBI:18420"/>
    </reaction>
</comment>
<comment type="catalytic activity">
    <reaction evidence="3">
        <text>Mn(2+)(in) = Mn(2+)(out)</text>
        <dbReference type="Rhea" id="RHEA:28699"/>
        <dbReference type="ChEBI" id="CHEBI:29035"/>
    </reaction>
</comment>
<comment type="catalytic activity">
    <reaction evidence="3">
        <text>Co(2+)(in) = Co(2+)(out)</text>
        <dbReference type="Rhea" id="RHEA:28578"/>
        <dbReference type="ChEBI" id="CHEBI:48828"/>
    </reaction>
</comment>
<comment type="catalytic activity">
    <reaction evidence="3">
        <text>Ni(2+)(in) = Ni(2+)(out)</text>
        <dbReference type="Rhea" id="RHEA:29831"/>
        <dbReference type="ChEBI" id="CHEBI:49786"/>
    </reaction>
</comment>
<comment type="catalytic activity">
    <reaction evidence="3">
        <text>Fe(2+)(in) = Fe(2+)(out)</text>
        <dbReference type="Rhea" id="RHEA:28486"/>
        <dbReference type="ChEBI" id="CHEBI:29033"/>
    </reaction>
</comment>
<comment type="biophysicochemical properties">
    <kinetics>
        <KM evidence="3">0.34 mM for Mg(2+)</KM>
    </kinetics>
</comment>
<comment type="subcellular location">
    <subcellularLocation>
        <location evidence="1">Cell membrane</location>
        <topology evidence="2">Multi-pass membrane protein</topology>
    </subcellularLocation>
</comment>
<comment type="similarity">
    <text evidence="4">Belongs to the SLC41A transporter family.</text>
</comment>
<evidence type="ECO:0000250" key="1">
    <source>
        <dbReference type="UniProtKB" id="Q96JW4"/>
    </source>
</evidence>
<evidence type="ECO:0000255" key="2"/>
<evidence type="ECO:0000269" key="3">
    <source>
    </source>
</evidence>
<evidence type="ECO:0000305" key="4"/>
<evidence type="ECO:0007744" key="5">
    <source>
    </source>
</evidence>
<gene>
    <name type="primary">Slc41a2</name>
</gene>